<protein>
    <recommendedName>
        <fullName>Vancomycin aglycone glucosyltransferase</fullName>
        <ecNumber>2.4.1.310</ecNumber>
    </recommendedName>
    <alternativeName>
        <fullName>Glycosyltransferase GtfB</fullName>
    </alternativeName>
</protein>
<reference key="1">
    <citation type="journal article" date="1997" name="Chem. Biol.">
        <title>Production of hybrid glycopeptide antibiotics in vitro and in Streptomyces toyocaensis.</title>
        <authorList>
            <person name="Solenberg P.J."/>
            <person name="Matsushima P."/>
            <person name="Stack D.R."/>
            <person name="Wilkie S.C."/>
            <person name="Thompson R.C."/>
            <person name="Baltz R.H."/>
        </authorList>
    </citation>
    <scope>NUCLEOTIDE SEQUENCE [GENOMIC DNA]</scope>
    <scope>FUNCTION</scope>
</reference>
<reference key="2">
    <citation type="journal article" date="1998" name="Chem. Biol.">
        <title>Sequencing and analysis of genes involved in the biosynthesis of a vancomycin group antibiotic.</title>
        <authorList>
            <person name="van Wageningen A."/>
            <person name="Kirkpatrick P."/>
            <person name="Williams D."/>
            <person name="Harris B."/>
            <person name="Kershaw J."/>
            <person name="Lennard N."/>
            <person name="Jones M."/>
            <person name="Jones S."/>
            <person name="Solenberg P."/>
        </authorList>
    </citation>
    <scope>NUCLEOTIDE SEQUENCE [GENOMIC DNA]</scope>
    <scope>PATHWAY</scope>
</reference>
<reference key="3">
    <citation type="journal article" date="2001" name="Biochemistry">
        <title>Tandem action of glycosyltransferases in the maturation of vancomycin and teicoplanin aglycones: novel glycopeptides.</title>
        <authorList>
            <person name="Losey H.C."/>
            <person name="Peczuh M.W."/>
            <person name="Chen Z."/>
            <person name="Eggert U.S."/>
            <person name="Dong S.D."/>
            <person name="Pelczer I."/>
            <person name="Kahne D."/>
            <person name="Walsh C.T."/>
        </authorList>
    </citation>
    <scope>FUNCTION</scope>
</reference>
<reference key="4">
    <citation type="journal article" date="2001" name="Structure">
        <title>Structure of the UDP-glucosyltransferase GtfB that modifies the heptapeptide aglycone in the biosynthesis of vancomycin group antibiotics.</title>
        <authorList>
            <person name="Mulichak A.M."/>
            <person name="Losey H.C."/>
            <person name="Walsh C.T."/>
            <person name="Garavito R.M."/>
        </authorList>
    </citation>
    <scope>X-RAY CRYSTALLOGRAPHY (1.80 ANGSTROMS)</scope>
    <scope>CATALYTIC ACTIVITY</scope>
    <scope>BIOPHYSICOCHEMICAL PROPERTIES</scope>
    <scope>MUTAGENESIS OF ASP-13; HIS-125 AND ASP-332</scope>
</reference>
<sequence length="407" mass="42666">MRVLLATCGSRGDTEPLVALAVRVRDLGADVRMCAPPDCAERLAEVGVPHVPVGPSARAPIQRAKPLTAEDVRRFTTEAIATQFDEIPAAAEGCAAVVTTGLLAAAIGVRSVAEKLGIPYFYAFHCPSYVPSPYYPPPPLGEPSTQDTIDIPAQWERNNQSAYQRYGGLLNSHRDAIGLPPVEDIFTFGYTDHPWVAADPVLAPLQPTDLDAVQTGAWILPDERPLSPELAAFLDAGPPPVYLGFGSLGAPADAVRVAIDAIRAHGRRVILSRGWADLVLPDDGADCFAIGEVNHQVLFGRVAAVIHHGGAGTTHVAARAGAPQILLPQMADQPYYAGRVAELGVGVAHDGPIPTFDSLSAALATALTPETHARATAVAGTIRTDGAAVAARLLLDAVSREKPTVSA</sequence>
<organism>
    <name type="scientific">Amycolatopsis orientalis</name>
    <name type="common">Nocardia orientalis</name>
    <dbReference type="NCBI Taxonomy" id="31958"/>
    <lineage>
        <taxon>Bacteria</taxon>
        <taxon>Bacillati</taxon>
        <taxon>Actinomycetota</taxon>
        <taxon>Actinomycetes</taxon>
        <taxon>Pseudonocardiales</taxon>
        <taxon>Pseudonocardiaceae</taxon>
        <taxon>Amycolatopsis</taxon>
    </lineage>
</organism>
<evidence type="ECO:0000269" key="1">
    <source>
    </source>
</evidence>
<evidence type="ECO:0000269" key="2">
    <source>
    </source>
</evidence>
<evidence type="ECO:0000269" key="3">
    <source>
    </source>
</evidence>
<evidence type="ECO:0000269" key="4">
    <source>
    </source>
</evidence>
<evidence type="ECO:0000305" key="5"/>
<evidence type="ECO:0007829" key="6">
    <source>
        <dbReference type="PDB" id="1IIR"/>
    </source>
</evidence>
<feature type="chain" id="PRO_0000430437" description="Vancomycin aglycone glucosyltransferase">
    <location>
        <begin position="1"/>
        <end position="407"/>
    </location>
</feature>
<feature type="mutagenesis site" description="Decreased kcat, while it does not affect the KM for UDP-glucose." evidence="2">
    <original>D</original>
    <variation>A</variation>
    <location>
        <position position="13"/>
    </location>
</feature>
<feature type="mutagenesis site" description="No decrease in catalytic rate." evidence="2">
    <original>H</original>
    <variation>A</variation>
    <location>
        <position position="125"/>
    </location>
</feature>
<feature type="mutagenesis site" description="Strongly decreased activity." evidence="2">
    <original>D</original>
    <variation>A</variation>
    <location>
        <position position="332"/>
    </location>
</feature>
<feature type="strand" evidence="6">
    <location>
        <begin position="2"/>
        <end position="6"/>
    </location>
</feature>
<feature type="helix" evidence="6">
    <location>
        <begin position="11"/>
        <end position="26"/>
    </location>
</feature>
<feature type="strand" evidence="6">
    <location>
        <begin position="30"/>
        <end position="35"/>
    </location>
</feature>
<feature type="helix" evidence="6">
    <location>
        <begin position="37"/>
        <end position="39"/>
    </location>
</feature>
<feature type="helix" evidence="6">
    <location>
        <begin position="40"/>
        <end position="45"/>
    </location>
</feature>
<feature type="strand" evidence="6">
    <location>
        <begin position="50"/>
        <end position="52"/>
    </location>
</feature>
<feature type="helix" evidence="6">
    <location>
        <begin position="69"/>
        <end position="90"/>
    </location>
</feature>
<feature type="turn" evidence="6">
    <location>
        <begin position="91"/>
        <end position="93"/>
    </location>
</feature>
<feature type="strand" evidence="6">
    <location>
        <begin position="95"/>
        <end position="101"/>
    </location>
</feature>
<feature type="helix" evidence="6">
    <location>
        <begin position="103"/>
        <end position="116"/>
    </location>
</feature>
<feature type="strand" evidence="6">
    <location>
        <begin position="120"/>
        <end position="126"/>
    </location>
</feature>
<feature type="helix" evidence="6">
    <location>
        <begin position="127"/>
        <end position="129"/>
    </location>
</feature>
<feature type="strand" evidence="6">
    <location>
        <begin position="133"/>
        <end position="135"/>
    </location>
</feature>
<feature type="helix" evidence="6">
    <location>
        <begin position="150"/>
        <end position="176"/>
    </location>
</feature>
<feature type="helix" evidence="6">
    <location>
        <begin position="185"/>
        <end position="190"/>
    </location>
</feature>
<feature type="turn" evidence="6">
    <location>
        <begin position="200"/>
        <end position="202"/>
    </location>
</feature>
<feature type="helix" evidence="6">
    <location>
        <begin position="228"/>
        <end position="235"/>
    </location>
</feature>
<feature type="strand" evidence="6">
    <location>
        <begin position="241"/>
        <end position="244"/>
    </location>
</feature>
<feature type="helix" evidence="6">
    <location>
        <begin position="252"/>
        <end position="264"/>
    </location>
</feature>
<feature type="strand" evidence="6">
    <location>
        <begin position="269"/>
        <end position="271"/>
    </location>
</feature>
<feature type="helix" evidence="6">
    <location>
        <begin position="284"/>
        <end position="286"/>
    </location>
</feature>
<feature type="strand" evidence="6">
    <location>
        <begin position="287"/>
        <end position="289"/>
    </location>
</feature>
<feature type="helix" evidence="6">
    <location>
        <begin position="295"/>
        <end position="298"/>
    </location>
</feature>
<feature type="helix" evidence="6">
    <location>
        <begin position="299"/>
        <end position="301"/>
    </location>
</feature>
<feature type="strand" evidence="6">
    <location>
        <begin position="302"/>
        <end position="307"/>
    </location>
</feature>
<feature type="helix" evidence="6">
    <location>
        <begin position="311"/>
        <end position="320"/>
    </location>
</feature>
<feature type="strand" evidence="6">
    <location>
        <begin position="324"/>
        <end position="326"/>
    </location>
</feature>
<feature type="helix" evidence="6">
    <location>
        <begin position="333"/>
        <end position="342"/>
    </location>
</feature>
<feature type="strand" evidence="6">
    <location>
        <begin position="345"/>
        <end position="348"/>
    </location>
</feature>
<feature type="strand" evidence="6">
    <location>
        <begin position="350"/>
        <end position="353"/>
    </location>
</feature>
<feature type="helix" evidence="6">
    <location>
        <begin position="356"/>
        <end position="366"/>
    </location>
</feature>
<feature type="helix" evidence="6">
    <location>
        <begin position="369"/>
        <end position="381"/>
    </location>
</feature>
<feature type="helix" evidence="6">
    <location>
        <begin position="386"/>
        <end position="399"/>
    </location>
</feature>
<comment type="function">
    <text evidence="1 3">Glucosyltransferase that transfers glucose to the 4-OH-Phegly(4) residue of vancomycin aglycone (AGV) to produce devancoaminyl-vancomycin (DVV) in the biosynthesis of glycopeptide antibiotic chloroeremomycin, a member of the vancomycin group of antibiotics.</text>
</comment>
<comment type="catalytic activity">
    <reaction evidence="2">
        <text>vancomycin aglycone + UDP-alpha-D-glucose = devancoaminyl-vancomycin + UDP</text>
        <dbReference type="Rhea" id="RHEA:38587"/>
        <dbReference type="ChEBI" id="CHEBI:58223"/>
        <dbReference type="ChEBI" id="CHEBI:58885"/>
        <dbReference type="ChEBI" id="CHEBI:75953"/>
        <dbReference type="ChEBI" id="CHEBI:77981"/>
        <dbReference type="EC" id="2.4.1.310"/>
    </reaction>
</comment>
<comment type="biophysicochemical properties">
    <kinetics>
        <KM evidence="2">1.3 mM for UDP-glucose</KM>
        <text>kcat is 33 min(-1).</text>
    </kinetics>
</comment>
<comment type="pathway">
    <text evidence="4">Antibiotic biosynthesis; vancomycin biosynthesis.</text>
</comment>
<comment type="miscellaneous">
    <text>In A.orientalis different glycosyltransferases are involved in biosynthesis of the vancomycin group of antibiotics. GtfA (AC P96558), GtfB and GtfC (AC P96560) are involved in biosynthesis of antibiotic chloroeremomycin, while GtfD (AC Q9AFC7) and GtfE (AC G4V4R9) are involved in biosynthesis of vancomycin.</text>
</comment>
<comment type="similarity">
    <text evidence="5">Belongs to the glycosyltransferase 28 family.</text>
</comment>
<accession>P96559</accession>
<dbReference type="EC" id="2.4.1.310"/>
<dbReference type="EMBL" id="U84349">
    <property type="protein sequence ID" value="AAB49293.1"/>
    <property type="molecule type" value="Genomic_DNA"/>
</dbReference>
<dbReference type="EMBL" id="AJ223998">
    <property type="protein sequence ID" value="CAA11775.1"/>
    <property type="molecule type" value="Genomic_DNA"/>
</dbReference>
<dbReference type="PIR" id="T30585">
    <property type="entry name" value="T30585"/>
</dbReference>
<dbReference type="PDB" id="1IIR">
    <property type="method" value="X-ray"/>
    <property type="resolution" value="1.80 A"/>
    <property type="chains" value="A=1-407"/>
</dbReference>
<dbReference type="PDBsum" id="1IIR"/>
<dbReference type="SMR" id="P96559"/>
<dbReference type="CAZy" id="GT1">
    <property type="family name" value="Glycosyltransferase Family 1"/>
</dbReference>
<dbReference type="KEGG" id="ag:CAA11775"/>
<dbReference type="BRENDA" id="2.4.1.310">
    <property type="organism ID" value="315"/>
</dbReference>
<dbReference type="UniPathway" id="UPA00162"/>
<dbReference type="EvolutionaryTrace" id="P96559"/>
<dbReference type="GO" id="GO:0016758">
    <property type="term" value="F:hexosyltransferase activity"/>
    <property type="evidence" value="ECO:0000314"/>
    <property type="project" value="UniProtKB"/>
</dbReference>
<dbReference type="GO" id="GO:0008194">
    <property type="term" value="F:UDP-glycosyltransferase activity"/>
    <property type="evidence" value="ECO:0007669"/>
    <property type="project" value="InterPro"/>
</dbReference>
<dbReference type="GO" id="GO:0005975">
    <property type="term" value="P:carbohydrate metabolic process"/>
    <property type="evidence" value="ECO:0007669"/>
    <property type="project" value="InterPro"/>
</dbReference>
<dbReference type="GO" id="GO:0030259">
    <property type="term" value="P:lipid glycosylation"/>
    <property type="evidence" value="ECO:0007669"/>
    <property type="project" value="InterPro"/>
</dbReference>
<dbReference type="GO" id="GO:0033072">
    <property type="term" value="P:vancomycin biosynthetic process"/>
    <property type="evidence" value="ECO:0000314"/>
    <property type="project" value="UniProtKB"/>
</dbReference>
<dbReference type="CDD" id="cd03784">
    <property type="entry name" value="GT1_Gtf-like"/>
    <property type="match status" value="1"/>
</dbReference>
<dbReference type="FunFam" id="3.40.50.2000:FF:000292">
    <property type="entry name" value="Glycosyltransferase GtfE"/>
    <property type="match status" value="1"/>
</dbReference>
<dbReference type="FunFam" id="3.40.50.2000:FF:000009">
    <property type="entry name" value="Sterol 3-beta-glucosyltransferase UGT80A2"/>
    <property type="match status" value="1"/>
</dbReference>
<dbReference type="Gene3D" id="3.40.50.2000">
    <property type="entry name" value="Glycogen Phosphorylase B"/>
    <property type="match status" value="2"/>
</dbReference>
<dbReference type="InterPro" id="IPR010610">
    <property type="entry name" value="EryCIII-like_C"/>
</dbReference>
<dbReference type="InterPro" id="IPR050426">
    <property type="entry name" value="Glycosyltransferase_28"/>
</dbReference>
<dbReference type="InterPro" id="IPR004276">
    <property type="entry name" value="GlycoTrans_28_N"/>
</dbReference>
<dbReference type="InterPro" id="IPR002213">
    <property type="entry name" value="UDP_glucos_trans"/>
</dbReference>
<dbReference type="PANTHER" id="PTHR48050">
    <property type="entry name" value="STEROL 3-BETA-GLUCOSYLTRANSFERASE"/>
    <property type="match status" value="1"/>
</dbReference>
<dbReference type="PANTHER" id="PTHR48050:SF13">
    <property type="entry name" value="STEROL 3-BETA-GLUCOSYLTRANSFERASE UGT80A2"/>
    <property type="match status" value="1"/>
</dbReference>
<dbReference type="Pfam" id="PF06722">
    <property type="entry name" value="EryCIII-like_C"/>
    <property type="match status" value="1"/>
</dbReference>
<dbReference type="Pfam" id="PF03033">
    <property type="entry name" value="Glyco_transf_28"/>
    <property type="match status" value="1"/>
</dbReference>
<dbReference type="SUPFAM" id="SSF53756">
    <property type="entry name" value="UDP-Glycosyltransferase/glycogen phosphorylase"/>
    <property type="match status" value="1"/>
</dbReference>
<proteinExistence type="evidence at protein level"/>
<name>GTFB_AMYOR</name>
<gene>
    <name type="primary">gtfB</name>
</gene>
<keyword id="KW-0002">3D-structure</keyword>
<keyword id="KW-0045">Antibiotic biosynthesis</keyword>
<keyword id="KW-0328">Glycosyltransferase</keyword>
<keyword id="KW-0808">Transferase</keyword>